<accession>B9IRX2</accession>
<dbReference type="EMBL" id="CP000227">
    <property type="protein sequence ID" value="ACM15580.1"/>
    <property type="molecule type" value="Genomic_DNA"/>
</dbReference>
<dbReference type="SMR" id="B9IRX2"/>
<dbReference type="KEGG" id="bcq:BCQ_5180"/>
<dbReference type="HOGENOM" id="CLU_116648_1_0_9"/>
<dbReference type="Proteomes" id="UP000000441">
    <property type="component" value="Chromosome"/>
</dbReference>
<dbReference type="GO" id="GO:0000428">
    <property type="term" value="C:DNA-directed RNA polymerase complex"/>
    <property type="evidence" value="ECO:0007669"/>
    <property type="project" value="UniProtKB-KW"/>
</dbReference>
<dbReference type="GO" id="GO:0003899">
    <property type="term" value="F:DNA-directed RNA polymerase activity"/>
    <property type="evidence" value="ECO:0007669"/>
    <property type="project" value="UniProtKB-UniRule"/>
</dbReference>
<dbReference type="GO" id="GO:0006351">
    <property type="term" value="P:DNA-templated transcription"/>
    <property type="evidence" value="ECO:0007669"/>
    <property type="project" value="InterPro"/>
</dbReference>
<dbReference type="GO" id="GO:0006355">
    <property type="term" value="P:regulation of DNA-templated transcription"/>
    <property type="evidence" value="ECO:0007669"/>
    <property type="project" value="UniProtKB-UniRule"/>
</dbReference>
<dbReference type="FunFam" id="1.10.10.1250:FF:000001">
    <property type="entry name" value="Probable DNA-directed RNA polymerase subunit delta"/>
    <property type="match status" value="1"/>
</dbReference>
<dbReference type="Gene3D" id="1.10.10.1250">
    <property type="entry name" value="RNA polymerase, subunit delta, N-terminal domain"/>
    <property type="match status" value="1"/>
</dbReference>
<dbReference type="HAMAP" id="MF_00357">
    <property type="entry name" value="RNApol_bact_RpoE"/>
    <property type="match status" value="1"/>
</dbReference>
<dbReference type="InterPro" id="IPR007759">
    <property type="entry name" value="Asxl_HARE-HTH"/>
</dbReference>
<dbReference type="InterPro" id="IPR038087">
    <property type="entry name" value="RNAP_delta_N_dom_sf"/>
</dbReference>
<dbReference type="InterPro" id="IPR029757">
    <property type="entry name" value="RpoE"/>
</dbReference>
<dbReference type="NCBIfam" id="TIGR04567">
    <property type="entry name" value="RNAP_delt_lowGC"/>
    <property type="match status" value="1"/>
</dbReference>
<dbReference type="Pfam" id="PF05066">
    <property type="entry name" value="HARE-HTH"/>
    <property type="match status" value="1"/>
</dbReference>
<dbReference type="PROSITE" id="PS51913">
    <property type="entry name" value="HTH_HARE"/>
    <property type="match status" value="1"/>
</dbReference>
<comment type="function">
    <text evidence="1">Participates in both the initiation and recycling phases of transcription. In the presence of the delta subunit, RNAP displays an increased specificity of transcription, a decreased affinity for nucleic acids, and an increased efficiency of RNA synthesis because of enhanced recycling.</text>
</comment>
<comment type="subunit">
    <text evidence="1">RNAP is composed of a core of 2 alpha, a beta and a beta' subunits. The core is associated with a delta subunit and one of several sigma factors.</text>
</comment>
<comment type="similarity">
    <text evidence="1">Belongs to the RpoE family.</text>
</comment>
<gene>
    <name evidence="1" type="primary">rpoE</name>
    <name type="ordered locus">BCQ_5180</name>
</gene>
<keyword id="KW-0240">DNA-directed RNA polymerase</keyword>
<keyword id="KW-0548">Nucleotidyltransferase</keyword>
<keyword id="KW-0804">Transcription</keyword>
<keyword id="KW-0808">Transferase</keyword>
<feature type="chain" id="PRO_1000133446" description="Probable DNA-directed RNA polymerase subunit delta">
    <location>
        <begin position="1"/>
        <end position="177"/>
    </location>
</feature>
<feature type="domain" description="HTH HARE-type" evidence="2">
    <location>
        <begin position="14"/>
        <end position="81"/>
    </location>
</feature>
<feature type="region of interest" description="Disordered" evidence="3">
    <location>
        <begin position="93"/>
        <end position="177"/>
    </location>
</feature>
<feature type="compositionally biased region" description="Acidic residues" evidence="3">
    <location>
        <begin position="106"/>
        <end position="177"/>
    </location>
</feature>
<protein>
    <recommendedName>
        <fullName evidence="1">Probable DNA-directed RNA polymerase subunit delta</fullName>
    </recommendedName>
    <alternativeName>
        <fullName evidence="1">RNAP delta factor</fullName>
    </alternativeName>
</protein>
<sequence length="177" mass="20809">MDFKQYSPEELKECSMIEVVHSVLGDKKQATTFNELVQEIAQVLGLSQEQVNAKIAQFYTDLNIDGRFINLGENRWGLRSWYPYEQIDEEILPQPKPKKKRKVEEDGFDDYIEEDEDDFDDVDGNEDEDDDVEDLDKVLEDEDGDDDDLDDLDDDEDDFAEEELEYDETEEEEEEEL</sequence>
<proteinExistence type="inferred from homology"/>
<reference key="1">
    <citation type="journal article" date="2009" name="J. Bacteriol.">
        <title>Complete genome sequence of the extremophilic Bacillus cereus strain Q1 with industrial applications.</title>
        <authorList>
            <person name="Xiong Z."/>
            <person name="Jiang Y."/>
            <person name="Qi D."/>
            <person name="Lu H."/>
            <person name="Yang F."/>
            <person name="Yang J."/>
            <person name="Chen L."/>
            <person name="Sun L."/>
            <person name="Xu X."/>
            <person name="Xue Y."/>
            <person name="Zhu Y."/>
            <person name="Jin Q."/>
        </authorList>
    </citation>
    <scope>NUCLEOTIDE SEQUENCE [LARGE SCALE GENOMIC DNA]</scope>
    <source>
        <strain>Q1</strain>
    </source>
</reference>
<name>RPOE_BACCQ</name>
<organism>
    <name type="scientific">Bacillus cereus (strain Q1)</name>
    <dbReference type="NCBI Taxonomy" id="361100"/>
    <lineage>
        <taxon>Bacteria</taxon>
        <taxon>Bacillati</taxon>
        <taxon>Bacillota</taxon>
        <taxon>Bacilli</taxon>
        <taxon>Bacillales</taxon>
        <taxon>Bacillaceae</taxon>
        <taxon>Bacillus</taxon>
        <taxon>Bacillus cereus group</taxon>
    </lineage>
</organism>
<evidence type="ECO:0000255" key="1">
    <source>
        <dbReference type="HAMAP-Rule" id="MF_00357"/>
    </source>
</evidence>
<evidence type="ECO:0000255" key="2">
    <source>
        <dbReference type="PROSITE-ProRule" id="PRU01261"/>
    </source>
</evidence>
<evidence type="ECO:0000256" key="3">
    <source>
        <dbReference type="SAM" id="MobiDB-lite"/>
    </source>
</evidence>